<proteinExistence type="inferred from homology"/>
<feature type="signal peptide" evidence="1">
    <location>
        <begin position="1"/>
        <end position="21"/>
    </location>
</feature>
<feature type="chain" id="PRO_0000035408" description="Kappa 1a-bungarotoxin">
    <location>
        <begin position="22"/>
        <end position="87"/>
    </location>
</feature>
<feature type="disulfide bond" evidence="2">
    <location>
        <begin position="24"/>
        <end position="42"/>
    </location>
</feature>
<feature type="disulfide bond" evidence="2">
    <location>
        <begin position="35"/>
        <end position="63"/>
    </location>
</feature>
<feature type="disulfide bond" evidence="2">
    <location>
        <begin position="48"/>
        <end position="52"/>
    </location>
</feature>
<feature type="disulfide bond" evidence="2">
    <location>
        <begin position="67"/>
        <end position="79"/>
    </location>
</feature>
<feature type="disulfide bond" evidence="2">
    <location>
        <begin position="80"/>
        <end position="85"/>
    </location>
</feature>
<keyword id="KW-0008">Acetylcholine receptor inhibiting toxin</keyword>
<keyword id="KW-1015">Disulfide bond</keyword>
<keyword id="KW-0872">Ion channel impairing toxin</keyword>
<keyword id="KW-0528">Neurotoxin</keyword>
<keyword id="KW-0629">Postsynaptic neurotoxin</keyword>
<keyword id="KW-0964">Secreted</keyword>
<keyword id="KW-0732">Signal</keyword>
<keyword id="KW-0800">Toxin</keyword>
<sequence length="87" mass="9580">MKTLLLTLVVVTIVCLDLGYTRTCLISPSSTPQTCPQGQDICFLKAQCDKFCSIRGPVIEQGCVATCPQFRSNYRSLLCCTTDNCNH</sequence>
<reference key="1">
    <citation type="submission" date="2001-10" db="EMBL/GenBank/DDBJ databases">
        <title>Structural and functional genomics of Bungarus candidus.</title>
        <authorList>
            <person name="Tsai I.H."/>
            <person name="Wang Y.M."/>
            <person name="Hsu H.Y."/>
        </authorList>
    </citation>
    <scope>NUCLEOTIDE SEQUENCE [MRNA]</scope>
    <source>
        <tissue>Venom gland</tissue>
    </source>
</reference>
<name>3LKA_BUNCA</name>
<accession>Q8AY56</accession>
<organism>
    <name type="scientific">Bungarus candidus</name>
    <name type="common">Malayan krait</name>
    <dbReference type="NCBI Taxonomy" id="92438"/>
    <lineage>
        <taxon>Eukaryota</taxon>
        <taxon>Metazoa</taxon>
        <taxon>Chordata</taxon>
        <taxon>Craniata</taxon>
        <taxon>Vertebrata</taxon>
        <taxon>Euteleostomi</taxon>
        <taxon>Lepidosauria</taxon>
        <taxon>Squamata</taxon>
        <taxon>Bifurcata</taxon>
        <taxon>Unidentata</taxon>
        <taxon>Episquamata</taxon>
        <taxon>Toxicofera</taxon>
        <taxon>Serpentes</taxon>
        <taxon>Colubroidea</taxon>
        <taxon>Elapidae</taxon>
        <taxon>Bungarinae</taxon>
        <taxon>Bungarus</taxon>
    </lineage>
</organism>
<comment type="function">
    <text evidence="2">Postsynaptic neurotoxin that binds and inhibits neuronal nicotinic acetylcholine receptors (nAChR) with high affinity (IC(50)&lt;100 nM). Is a selective, and slowly reversible antagonist of alpha-3/CHRNA3-containing and some alpha-4/CHRNA4-containing AChRs.</text>
</comment>
<comment type="subunit">
    <text evidence="3">Homo- and heterodimer; non-covalently linked.</text>
</comment>
<comment type="subcellular location">
    <subcellularLocation>
        <location evidence="1">Secreted</location>
    </subcellularLocation>
</comment>
<comment type="tissue specificity">
    <text evidence="4">Expressed by the venom gland.</text>
</comment>
<comment type="similarity">
    <text evidence="4">Belongs to the three-finger toxin family. Long-chain subfamily. Kappa-neurotoxin sub-subfamily.</text>
</comment>
<dbReference type="EMBL" id="AY057872">
    <property type="protein sequence ID" value="AAL30054.1"/>
    <property type="molecule type" value="mRNA"/>
</dbReference>
<dbReference type="BMRB" id="Q8AY56"/>
<dbReference type="SMR" id="Q8AY56"/>
<dbReference type="GO" id="GO:0005576">
    <property type="term" value="C:extracellular region"/>
    <property type="evidence" value="ECO:0007669"/>
    <property type="project" value="UniProtKB-SubCell"/>
</dbReference>
<dbReference type="GO" id="GO:0030550">
    <property type="term" value="F:acetylcholine receptor inhibitor activity"/>
    <property type="evidence" value="ECO:0007669"/>
    <property type="project" value="UniProtKB-KW"/>
</dbReference>
<dbReference type="GO" id="GO:0099106">
    <property type="term" value="F:ion channel regulator activity"/>
    <property type="evidence" value="ECO:0007669"/>
    <property type="project" value="UniProtKB-KW"/>
</dbReference>
<dbReference type="GO" id="GO:0090729">
    <property type="term" value="F:toxin activity"/>
    <property type="evidence" value="ECO:0007669"/>
    <property type="project" value="UniProtKB-KW"/>
</dbReference>
<dbReference type="CDD" id="cd00206">
    <property type="entry name" value="TFP_snake_toxin"/>
    <property type="match status" value="1"/>
</dbReference>
<dbReference type="Gene3D" id="2.10.60.10">
    <property type="entry name" value="CD59"/>
    <property type="match status" value="1"/>
</dbReference>
<dbReference type="InterPro" id="IPR003571">
    <property type="entry name" value="Snake_3FTx"/>
</dbReference>
<dbReference type="InterPro" id="IPR045860">
    <property type="entry name" value="Snake_toxin-like_sf"/>
</dbReference>
<dbReference type="InterPro" id="IPR018354">
    <property type="entry name" value="Snake_toxin_con_site"/>
</dbReference>
<dbReference type="InterPro" id="IPR054131">
    <property type="entry name" value="Toxin_cobra-type"/>
</dbReference>
<dbReference type="Pfam" id="PF21947">
    <property type="entry name" value="Toxin_cobra-type"/>
    <property type="match status" value="1"/>
</dbReference>
<dbReference type="SUPFAM" id="SSF57302">
    <property type="entry name" value="Snake toxin-like"/>
    <property type="match status" value="1"/>
</dbReference>
<dbReference type="PROSITE" id="PS00272">
    <property type="entry name" value="SNAKE_TOXIN"/>
    <property type="match status" value="1"/>
</dbReference>
<protein>
    <recommendedName>
        <fullName>Kappa 1a-bungarotoxin</fullName>
    </recommendedName>
</protein>
<evidence type="ECO:0000250" key="1"/>
<evidence type="ECO:0000250" key="2">
    <source>
        <dbReference type="UniProtKB" id="P01398"/>
    </source>
</evidence>
<evidence type="ECO:0000250" key="3">
    <source>
        <dbReference type="UniProtKB" id="P15816"/>
    </source>
</evidence>
<evidence type="ECO:0000305" key="4"/>